<dbReference type="EC" id="7.2.1.1" evidence="1"/>
<dbReference type="EMBL" id="AE002160">
    <property type="protein sequence ID" value="AAF38896.1"/>
    <property type="molecule type" value="Genomic_DNA"/>
</dbReference>
<dbReference type="PIR" id="C81751">
    <property type="entry name" value="C81751"/>
</dbReference>
<dbReference type="RefSeq" id="WP_010229072.1">
    <property type="nucleotide sequence ID" value="NZ_CP063055.1"/>
</dbReference>
<dbReference type="SMR" id="Q9PLU3"/>
<dbReference type="GeneID" id="1245525"/>
<dbReference type="KEGG" id="cmu:TC_0002"/>
<dbReference type="eggNOG" id="COG1726">
    <property type="taxonomic scope" value="Bacteria"/>
</dbReference>
<dbReference type="HOGENOM" id="CLU_046656_0_0_0"/>
<dbReference type="OrthoDB" id="9774536at2"/>
<dbReference type="Proteomes" id="UP000000800">
    <property type="component" value="Chromosome"/>
</dbReference>
<dbReference type="GO" id="GO:0016655">
    <property type="term" value="F:oxidoreductase activity, acting on NAD(P)H, quinone or similar compound as acceptor"/>
    <property type="evidence" value="ECO:0007669"/>
    <property type="project" value="UniProtKB-UniRule"/>
</dbReference>
<dbReference type="GO" id="GO:0006814">
    <property type="term" value="P:sodium ion transport"/>
    <property type="evidence" value="ECO:0007669"/>
    <property type="project" value="UniProtKB-UniRule"/>
</dbReference>
<dbReference type="HAMAP" id="MF_00425">
    <property type="entry name" value="NqrA"/>
    <property type="match status" value="1"/>
</dbReference>
<dbReference type="InterPro" id="IPR008703">
    <property type="entry name" value="NqrA"/>
</dbReference>
<dbReference type="InterPro" id="IPR056148">
    <property type="entry name" value="NQRA_2nd"/>
</dbReference>
<dbReference type="InterPro" id="IPR022615">
    <property type="entry name" value="NqrA_C_domain"/>
</dbReference>
<dbReference type="InterPro" id="IPR056147">
    <property type="entry name" value="NQRA_N"/>
</dbReference>
<dbReference type="NCBIfam" id="TIGR01936">
    <property type="entry name" value="nqrA"/>
    <property type="match status" value="1"/>
</dbReference>
<dbReference type="NCBIfam" id="NF003758">
    <property type="entry name" value="PRK05352.1-1"/>
    <property type="match status" value="1"/>
</dbReference>
<dbReference type="PANTHER" id="PTHR37839">
    <property type="entry name" value="NA(+)-TRANSLOCATING NADH-QUINONE REDUCTASE SUBUNIT A"/>
    <property type="match status" value="1"/>
</dbReference>
<dbReference type="PANTHER" id="PTHR37839:SF1">
    <property type="entry name" value="NA(+)-TRANSLOCATING NADH-QUINONE REDUCTASE SUBUNIT A"/>
    <property type="match status" value="1"/>
</dbReference>
<dbReference type="Pfam" id="PF24836">
    <property type="entry name" value="NQRA_2nd"/>
    <property type="match status" value="1"/>
</dbReference>
<dbReference type="Pfam" id="PF05896">
    <property type="entry name" value="NQRA_N"/>
    <property type="match status" value="1"/>
</dbReference>
<dbReference type="Pfam" id="PF11973">
    <property type="entry name" value="NQRA_SLBB"/>
    <property type="match status" value="1"/>
</dbReference>
<evidence type="ECO:0000255" key="1">
    <source>
        <dbReference type="HAMAP-Rule" id="MF_00425"/>
    </source>
</evidence>
<proteinExistence type="inferred from homology"/>
<feature type="chain" id="PRO_0000214194" description="Na(+)-translocating NADH-quinone reductase subunit A">
    <location>
        <begin position="1"/>
        <end position="465"/>
    </location>
</feature>
<protein>
    <recommendedName>
        <fullName evidence="1">Na(+)-translocating NADH-quinone reductase subunit A</fullName>
        <shortName evidence="1">Na(+)-NQR subunit A</shortName>
        <shortName evidence="1">Na(+)-translocating NQR subunit A</shortName>
        <ecNumber evidence="1">7.2.1.1</ecNumber>
    </recommendedName>
    <alternativeName>
        <fullName evidence="1">NQR complex subunit A</fullName>
    </alternativeName>
    <alternativeName>
        <fullName evidence="1">NQR-1 subunit A</fullName>
    </alternativeName>
</protein>
<name>NQRA_CHLMU</name>
<reference key="1">
    <citation type="journal article" date="2000" name="Nucleic Acids Res.">
        <title>Genome sequences of Chlamydia trachomatis MoPn and Chlamydia pneumoniae AR39.</title>
        <authorList>
            <person name="Read T.D."/>
            <person name="Brunham R.C."/>
            <person name="Shen C."/>
            <person name="Gill S.R."/>
            <person name="Heidelberg J.F."/>
            <person name="White O."/>
            <person name="Hickey E.K."/>
            <person name="Peterson J.D."/>
            <person name="Utterback T.R."/>
            <person name="Berry K.J."/>
            <person name="Bass S."/>
            <person name="Linher K.D."/>
            <person name="Weidman J.F."/>
            <person name="Khouri H.M."/>
            <person name="Craven B."/>
            <person name="Bowman C."/>
            <person name="Dodson R.J."/>
            <person name="Gwinn M.L."/>
            <person name="Nelson W.C."/>
            <person name="DeBoy R.T."/>
            <person name="Kolonay J.F."/>
            <person name="McClarty G."/>
            <person name="Salzberg S.L."/>
            <person name="Eisen J.A."/>
            <person name="Fraser C.M."/>
        </authorList>
    </citation>
    <scope>NUCLEOTIDE SEQUENCE [LARGE SCALE GENOMIC DNA]</scope>
    <source>
        <strain>MoPn / Nigg</strain>
    </source>
</reference>
<sequence>MKIIVSRGLDLSLKGAPKESGFCGKVDPAFVSVDLRPFAPLPLGVKVSPGDQITAGSPLAEYKSFPGVFITSSVDGEVIEIRRGSKRALLDIVIKKKPGVSQTKFSYDLHALSQKELLEVFKKEGLFTLFKQRPFNIPALPTQSPRDVFINLADNRPFTPSVEKHLSLFSSKEDGYYIFVVGVQAIAKLFGLKPHIVSTDRLSLPTQDLISVAHLHTIAGPYPSGSPSTHIHHIARIRNDRDIVFTISFQEVLSIGHLFLKGFFLGQQVVALAGSALPPSQRKYLITAKGASFKDLLPQEIFSSNDVSLISGDPLTGRLCNKEENPCLGMRDHTITILPNPKTREMFSFLRLGWNKLTVTRTYLSGFFKRKRVFMDMNTNLHGEKRPIIDSEIYEKVSAIAVPVAPLIKALETQNFEEACRLGLLEVSPEDFALPTFIDPSKTEMFAIVKEALIRYAKENVLTPL</sequence>
<comment type="function">
    <text evidence="1">NQR complex catalyzes the reduction of ubiquinone-1 to ubiquinol by two successive reactions, coupled with the transport of Na(+) ions from the cytoplasm to the periplasm. NqrA to NqrE are probably involved in the second step, the conversion of ubisemiquinone to ubiquinol.</text>
</comment>
<comment type="catalytic activity">
    <reaction evidence="1">
        <text>a ubiquinone + n Na(+)(in) + NADH + H(+) = a ubiquinol + n Na(+)(out) + NAD(+)</text>
        <dbReference type="Rhea" id="RHEA:47748"/>
        <dbReference type="Rhea" id="RHEA-COMP:9565"/>
        <dbReference type="Rhea" id="RHEA-COMP:9566"/>
        <dbReference type="ChEBI" id="CHEBI:15378"/>
        <dbReference type="ChEBI" id="CHEBI:16389"/>
        <dbReference type="ChEBI" id="CHEBI:17976"/>
        <dbReference type="ChEBI" id="CHEBI:29101"/>
        <dbReference type="ChEBI" id="CHEBI:57540"/>
        <dbReference type="ChEBI" id="CHEBI:57945"/>
        <dbReference type="EC" id="7.2.1.1"/>
    </reaction>
</comment>
<comment type="subunit">
    <text evidence="1">Composed of six subunits; NqrA, NqrB, NqrC, NqrD, NqrE and NqrF.</text>
</comment>
<comment type="similarity">
    <text evidence="1">Belongs to the NqrA family.</text>
</comment>
<organism>
    <name type="scientific">Chlamydia muridarum (strain MoPn / Nigg)</name>
    <dbReference type="NCBI Taxonomy" id="243161"/>
    <lineage>
        <taxon>Bacteria</taxon>
        <taxon>Pseudomonadati</taxon>
        <taxon>Chlamydiota</taxon>
        <taxon>Chlamydiia</taxon>
        <taxon>Chlamydiales</taxon>
        <taxon>Chlamydiaceae</taxon>
        <taxon>Chlamydia/Chlamydophila group</taxon>
        <taxon>Chlamydia</taxon>
    </lineage>
</organism>
<gene>
    <name evidence="1" type="primary">nqrA</name>
    <name type="ordered locus">TC_0002</name>
</gene>
<accession>Q9PLU3</accession>
<keyword id="KW-0406">Ion transport</keyword>
<keyword id="KW-0520">NAD</keyword>
<keyword id="KW-0915">Sodium</keyword>
<keyword id="KW-0739">Sodium transport</keyword>
<keyword id="KW-1278">Translocase</keyword>
<keyword id="KW-0813">Transport</keyword>
<keyword id="KW-0830">Ubiquinone</keyword>